<proteinExistence type="inferred from homology"/>
<organism>
    <name type="scientific">Myxococcus xanthus (strain DK1622)</name>
    <dbReference type="NCBI Taxonomy" id="246197"/>
    <lineage>
        <taxon>Bacteria</taxon>
        <taxon>Pseudomonadati</taxon>
        <taxon>Myxococcota</taxon>
        <taxon>Myxococcia</taxon>
        <taxon>Myxococcales</taxon>
        <taxon>Cystobacterineae</taxon>
        <taxon>Myxococcaceae</taxon>
        <taxon>Myxococcus</taxon>
    </lineage>
</organism>
<comment type="similarity">
    <text evidence="1">Belongs to the bacterial ribosomal protein bL33 family.</text>
</comment>
<keyword id="KW-1185">Reference proteome</keyword>
<keyword id="KW-0687">Ribonucleoprotein</keyword>
<keyword id="KW-0689">Ribosomal protein</keyword>
<name>RL332_MYXXD</name>
<reference key="1">
    <citation type="journal article" date="2006" name="Proc. Natl. Acad. Sci. U.S.A.">
        <title>Evolution of sensory complexity recorded in a myxobacterial genome.</title>
        <authorList>
            <person name="Goldman B.S."/>
            <person name="Nierman W.C."/>
            <person name="Kaiser D."/>
            <person name="Slater S.C."/>
            <person name="Durkin A.S."/>
            <person name="Eisen J.A."/>
            <person name="Ronning C.M."/>
            <person name="Barbazuk W.B."/>
            <person name="Blanchard M."/>
            <person name="Field C."/>
            <person name="Halling C."/>
            <person name="Hinkle G."/>
            <person name="Iartchuk O."/>
            <person name="Kim H.S."/>
            <person name="Mackenzie C."/>
            <person name="Madupu R."/>
            <person name="Miller N."/>
            <person name="Shvartsbeyn A."/>
            <person name="Sullivan S.A."/>
            <person name="Vaudin M."/>
            <person name="Wiegand R."/>
            <person name="Kaplan H.B."/>
        </authorList>
    </citation>
    <scope>NUCLEOTIDE SEQUENCE [LARGE SCALE GENOMIC DNA]</scope>
    <source>
        <strain>DK1622</strain>
    </source>
</reference>
<sequence>MPKGNRTIIHLVSSAGTGYVYTTTKNKRKSQEKLQLRKYDPRVRKHVLFVEGKP</sequence>
<dbReference type="EMBL" id="CP000113">
    <property type="protein sequence ID" value="ABF86627.1"/>
    <property type="molecule type" value="Genomic_DNA"/>
</dbReference>
<dbReference type="SMR" id="Q1CY77"/>
<dbReference type="STRING" id="246197.MXAN_6523"/>
<dbReference type="EnsemblBacteria" id="ABF86627">
    <property type="protein sequence ID" value="ABF86627"/>
    <property type="gene ID" value="MXAN_6523"/>
</dbReference>
<dbReference type="GeneID" id="41363731"/>
<dbReference type="KEGG" id="mxa:MXAN_6523"/>
<dbReference type="eggNOG" id="COG0267">
    <property type="taxonomic scope" value="Bacteria"/>
</dbReference>
<dbReference type="HOGENOM" id="CLU_190949_1_1_7"/>
<dbReference type="OrthoDB" id="21586at2"/>
<dbReference type="Proteomes" id="UP000002402">
    <property type="component" value="Chromosome"/>
</dbReference>
<dbReference type="GO" id="GO:0022625">
    <property type="term" value="C:cytosolic large ribosomal subunit"/>
    <property type="evidence" value="ECO:0007669"/>
    <property type="project" value="TreeGrafter"/>
</dbReference>
<dbReference type="GO" id="GO:0003735">
    <property type="term" value="F:structural constituent of ribosome"/>
    <property type="evidence" value="ECO:0007669"/>
    <property type="project" value="InterPro"/>
</dbReference>
<dbReference type="GO" id="GO:0006412">
    <property type="term" value="P:translation"/>
    <property type="evidence" value="ECO:0007669"/>
    <property type="project" value="UniProtKB-UniRule"/>
</dbReference>
<dbReference type="Gene3D" id="2.20.28.120">
    <property type="entry name" value="Ribosomal protein L33"/>
    <property type="match status" value="1"/>
</dbReference>
<dbReference type="HAMAP" id="MF_00294">
    <property type="entry name" value="Ribosomal_bL33"/>
    <property type="match status" value="1"/>
</dbReference>
<dbReference type="InterPro" id="IPR001705">
    <property type="entry name" value="Ribosomal_bL33"/>
</dbReference>
<dbReference type="InterPro" id="IPR018264">
    <property type="entry name" value="Ribosomal_bL33_CS"/>
</dbReference>
<dbReference type="InterPro" id="IPR038584">
    <property type="entry name" value="Ribosomal_bL33_sf"/>
</dbReference>
<dbReference type="InterPro" id="IPR011332">
    <property type="entry name" value="Ribosomal_zn-bd"/>
</dbReference>
<dbReference type="NCBIfam" id="NF001860">
    <property type="entry name" value="PRK00595.1"/>
    <property type="match status" value="1"/>
</dbReference>
<dbReference type="NCBIfam" id="TIGR01023">
    <property type="entry name" value="rpmG_bact"/>
    <property type="match status" value="1"/>
</dbReference>
<dbReference type="PANTHER" id="PTHR15238">
    <property type="entry name" value="54S RIBOSOMAL PROTEIN L39, MITOCHONDRIAL"/>
    <property type="match status" value="1"/>
</dbReference>
<dbReference type="PANTHER" id="PTHR15238:SF1">
    <property type="entry name" value="LARGE RIBOSOMAL SUBUNIT PROTEIN BL33M"/>
    <property type="match status" value="1"/>
</dbReference>
<dbReference type="Pfam" id="PF00471">
    <property type="entry name" value="Ribosomal_L33"/>
    <property type="match status" value="1"/>
</dbReference>
<dbReference type="SUPFAM" id="SSF57829">
    <property type="entry name" value="Zn-binding ribosomal proteins"/>
    <property type="match status" value="1"/>
</dbReference>
<dbReference type="PROSITE" id="PS00582">
    <property type="entry name" value="RIBOSOMAL_L33"/>
    <property type="match status" value="1"/>
</dbReference>
<gene>
    <name evidence="1" type="primary">rpmG2</name>
    <name type="ordered locus">MXAN_6523</name>
</gene>
<feature type="chain" id="PRO_0000356578" description="Large ribosomal subunit protein bL33B">
    <location>
        <begin position="1"/>
        <end position="54"/>
    </location>
</feature>
<evidence type="ECO:0000255" key="1">
    <source>
        <dbReference type="HAMAP-Rule" id="MF_00294"/>
    </source>
</evidence>
<accession>Q1CY77</accession>
<protein>
    <recommendedName>
        <fullName evidence="1">Large ribosomal subunit protein bL33B</fullName>
    </recommendedName>
    <alternativeName>
        <fullName evidence="1">50S ribosomal protein L33 2</fullName>
    </alternativeName>
</protein>